<reference key="1">
    <citation type="journal article" date="1999" name="J. Mol. Biol.">
        <title>Analysis of 27 mammalian and 9 avian PrPs reveals high conservation of flexible regions of the prion protein.</title>
        <authorList>
            <person name="Wopfner F."/>
            <person name="Weidenhofer G."/>
            <person name="Schneider R."/>
            <person name="von Brunn A."/>
            <person name="Gilch S."/>
            <person name="Schwarz T.F."/>
            <person name="Werner T."/>
            <person name="Schatzl H.M."/>
        </authorList>
    </citation>
    <scope>NUCLEOTIDE SEQUENCE [GENOMIC DNA]</scope>
    <source>
        <tissue>Brain</tissue>
    </source>
</reference>
<dbReference type="EMBL" id="AF117325">
    <property type="protein sequence ID" value="AAD19996.1"/>
    <property type="molecule type" value="Genomic_DNA"/>
</dbReference>
<dbReference type="BMRB" id="Q9Z0T3"/>
<dbReference type="SMR" id="Q9Z0T3"/>
<dbReference type="GlyCosmos" id="Q9Z0T3">
    <property type="glycosylation" value="2 sites, No reported glycans"/>
</dbReference>
<dbReference type="OrthoDB" id="9048788at2759"/>
<dbReference type="GO" id="GO:0005794">
    <property type="term" value="C:Golgi apparatus"/>
    <property type="evidence" value="ECO:0007669"/>
    <property type="project" value="UniProtKB-SubCell"/>
</dbReference>
<dbReference type="GO" id="GO:0005886">
    <property type="term" value="C:plasma membrane"/>
    <property type="evidence" value="ECO:0007669"/>
    <property type="project" value="UniProtKB-SubCell"/>
</dbReference>
<dbReference type="GO" id="GO:0098552">
    <property type="term" value="C:side of membrane"/>
    <property type="evidence" value="ECO:0007669"/>
    <property type="project" value="UniProtKB-KW"/>
</dbReference>
<dbReference type="GO" id="GO:0005507">
    <property type="term" value="F:copper ion binding"/>
    <property type="evidence" value="ECO:0000250"/>
    <property type="project" value="UniProtKB"/>
</dbReference>
<dbReference type="GO" id="GO:0051260">
    <property type="term" value="P:protein homooligomerization"/>
    <property type="evidence" value="ECO:0007669"/>
    <property type="project" value="InterPro"/>
</dbReference>
<dbReference type="FunFam" id="1.10.790.10:FF:000001">
    <property type="entry name" value="Major prion protein"/>
    <property type="match status" value="1"/>
</dbReference>
<dbReference type="Gene3D" id="1.10.790.10">
    <property type="entry name" value="Prion/Doppel protein, beta-ribbon domain"/>
    <property type="match status" value="1"/>
</dbReference>
<dbReference type="InterPro" id="IPR000817">
    <property type="entry name" value="Prion"/>
</dbReference>
<dbReference type="InterPro" id="IPR036924">
    <property type="entry name" value="Prion/Doppel_b-ribbon_dom_sf"/>
</dbReference>
<dbReference type="InterPro" id="IPR022416">
    <property type="entry name" value="Prion/Doppel_prot_b-ribbon_dom"/>
</dbReference>
<dbReference type="InterPro" id="IPR020949">
    <property type="entry name" value="Prion_copper_b_octapeptide"/>
</dbReference>
<dbReference type="InterPro" id="IPR025860">
    <property type="entry name" value="Prion_N"/>
</dbReference>
<dbReference type="PANTHER" id="PTHR15506">
    <property type="entry name" value="DOPPEL PRION"/>
    <property type="match status" value="1"/>
</dbReference>
<dbReference type="PANTHER" id="PTHR15506:SF2">
    <property type="entry name" value="MAJOR PRION PROTEIN"/>
    <property type="match status" value="1"/>
</dbReference>
<dbReference type="Pfam" id="PF00377">
    <property type="entry name" value="Prion"/>
    <property type="match status" value="1"/>
</dbReference>
<dbReference type="Pfam" id="PF11587">
    <property type="entry name" value="Prion_bPrPp"/>
    <property type="match status" value="1"/>
</dbReference>
<dbReference type="Pfam" id="PF03991">
    <property type="entry name" value="Prion_octapep"/>
    <property type="match status" value="1"/>
</dbReference>
<dbReference type="PRINTS" id="PR00341">
    <property type="entry name" value="PRION"/>
</dbReference>
<dbReference type="SMART" id="SM00157">
    <property type="entry name" value="PRP"/>
    <property type="match status" value="1"/>
</dbReference>
<dbReference type="SUPFAM" id="SSF54098">
    <property type="entry name" value="Prion-like"/>
    <property type="match status" value="1"/>
</dbReference>
<dbReference type="PROSITE" id="PS00291">
    <property type="entry name" value="PRION_1"/>
    <property type="match status" value="1"/>
</dbReference>
<dbReference type="PROSITE" id="PS00706">
    <property type="entry name" value="PRION_2"/>
    <property type="match status" value="1"/>
</dbReference>
<comment type="function">
    <text evidence="2 4">Its primary physiological function is unclear. Has cytoprotective activity against internal or environmental stresses. May play a role in neuronal development and synaptic plasticity. May be required for neuronal myelin sheath maintenance. May play a role in iron uptake and iron homeostasis. Soluble oligomers are toxic to cultured neuroblastoma cells and induce apoptosis (in vitro). Association with GPC1 (via its heparan sulfate chains) targets PRNP to lipid rafts. Also provides Cu(2+) or Zn(2+) for the ascorbate-mediated GPC1 deaminase degradation of its heparan sulfate side chains (By similarity).</text>
</comment>
<comment type="subunit">
    <text evidence="2 4">Monomer and homodimer. Has a tendency to aggregate into amyloid fibrils containing a cross-beta spine, formed by a steric zipper of superposed beta-strands. Soluble oligomers may represent an intermediate stage on the path to fibril formation. Copper binding may promote oligomerization. Interacts with GRB2, APP, ERI3/PRNPIP and SYN1. Mislocalized cytosolically exposed PrP interacts with MGRN1; this interaction alters MGRN1 subcellular location and causes lysosomal enlargement. Interacts with KIAA1191.</text>
</comment>
<comment type="subcellular location">
    <subcellularLocation>
        <location evidence="2">Cell membrane</location>
        <topology evidence="2">Lipid-anchor</topology>
        <topology evidence="2">GPI-anchor</topology>
    </subcellularLocation>
    <subcellularLocation>
        <location evidence="4">Golgi apparatus</location>
    </subcellularLocation>
    <text evidence="2">Targeted to lipid rafts via association with the heparan sulfate chains of GPC1. Colocates, in the presence of Cu(2+), to vesicles in para- and perinuclear regions, where both proteins undergo internalization. Heparin displaces PRNP from lipid rafts and promotes endocytosis.</text>
</comment>
<comment type="domain">
    <text evidence="2">The normal, monomeric form has a mainly alpha-helical structure. The disease-associated, protease-resistant form forms amyloid fibrils containing a cross-beta spine, formed by a steric zipper of superposed beta-strands. Disease mutations may favor intermolecular contacts via short beta strands, and may thereby trigger oligomerization.</text>
</comment>
<comment type="domain">
    <text evidence="2">Contains an N-terminal region composed of octamer repeats. At low copper concentrations, the sidechains of His residues from three or four repeats contribute to the binding of a single copper ion. Alternatively, a copper ion can be bound by interaction with the sidechain and backbone amide nitrogen of a single His residue. The observed copper binding stoichiometry suggests that two repeat regions cooperate to stabilize the binding of a single copper ion. At higher copper concentrations, each octamer can bind one copper ion by interactions with the His sidechain and Gly backbone atoms. A mixture of binding types may occur, especially in the case of octamer repeat expansion. Copper binding may stabilize the conformation of this region and may promote oligomerization.</text>
</comment>
<comment type="disease">
    <text evidence="7">Found in high quantity in the brain of humans and animals infected with degenerative neurological diseases such as kuru, Creutzfeldt-Jakob disease (CJD), Gerstmann-Straussler syndrome (GSS), scrapie, bovine spongiform encephalopathy (BSE), transmissible mink encephalopathy (TME), etc.</text>
</comment>
<comment type="similarity">
    <text evidence="7">Belongs to the prion family.</text>
</comment>
<gene>
    <name type="primary">PRNP</name>
    <name type="synonym">PRP</name>
</gene>
<protein>
    <recommendedName>
        <fullName>Major prion protein</fullName>
        <shortName>PrP</shortName>
    </recommendedName>
    <cdAntigenName>CD230</cdAntigenName>
</protein>
<name>PRIO_SIGHI</name>
<feature type="signal peptide" evidence="1">
    <location>
        <begin position="1"/>
        <end position="22"/>
    </location>
</feature>
<feature type="chain" id="PRO_0000025729" description="Major prion protein">
    <location>
        <begin position="23"/>
        <end position="231"/>
    </location>
</feature>
<feature type="propeptide" id="PRO_0000025730" description="Removed in mature form" evidence="1">
    <location>
        <begin position="232"/>
        <end position="254"/>
    </location>
</feature>
<feature type="repeat" description="1">
    <location>
        <begin position="51"/>
        <end position="59"/>
    </location>
</feature>
<feature type="repeat" description="2">
    <location>
        <begin position="60"/>
        <end position="67"/>
    </location>
</feature>
<feature type="repeat" description="3">
    <location>
        <begin position="68"/>
        <end position="75"/>
    </location>
</feature>
<feature type="repeat" description="4">
    <location>
        <begin position="76"/>
        <end position="83"/>
    </location>
</feature>
<feature type="repeat" description="5">
    <location>
        <begin position="84"/>
        <end position="91"/>
    </location>
</feature>
<feature type="region of interest" description="Interaction with GRB2, ERI3 and SYN1" evidence="4">
    <location>
        <begin position="23"/>
        <end position="231"/>
    </location>
</feature>
<feature type="region of interest" description="Disordered" evidence="6">
    <location>
        <begin position="25"/>
        <end position="107"/>
    </location>
</feature>
<feature type="region of interest" description="5 X 8 AA tandem repeats of P-H-G-G-G-W-G-Q">
    <location>
        <begin position="51"/>
        <end position="91"/>
    </location>
</feature>
<feature type="compositionally biased region" description="Gly residues" evidence="6">
    <location>
        <begin position="52"/>
        <end position="95"/>
    </location>
</feature>
<feature type="binding site" evidence="2">
    <location>
        <position position="61"/>
    </location>
    <ligand>
        <name>Cu(2+)</name>
        <dbReference type="ChEBI" id="CHEBI:29036"/>
        <label>1</label>
    </ligand>
</feature>
<feature type="binding site" evidence="2">
    <location>
        <position position="62"/>
    </location>
    <ligand>
        <name>Cu(2+)</name>
        <dbReference type="ChEBI" id="CHEBI:29036"/>
        <label>1</label>
    </ligand>
</feature>
<feature type="binding site" evidence="2">
    <location>
        <position position="63"/>
    </location>
    <ligand>
        <name>Cu(2+)</name>
        <dbReference type="ChEBI" id="CHEBI:29036"/>
        <label>1</label>
    </ligand>
</feature>
<feature type="binding site" evidence="2">
    <location>
        <position position="69"/>
    </location>
    <ligand>
        <name>Cu(2+)</name>
        <dbReference type="ChEBI" id="CHEBI:29036"/>
        <label>2</label>
    </ligand>
</feature>
<feature type="binding site" evidence="2">
    <location>
        <position position="70"/>
    </location>
    <ligand>
        <name>Cu(2+)</name>
        <dbReference type="ChEBI" id="CHEBI:29036"/>
        <label>2</label>
    </ligand>
</feature>
<feature type="binding site" evidence="2">
    <location>
        <position position="71"/>
    </location>
    <ligand>
        <name>Cu(2+)</name>
        <dbReference type="ChEBI" id="CHEBI:29036"/>
        <label>2</label>
    </ligand>
</feature>
<feature type="binding site" evidence="2">
    <location>
        <position position="77"/>
    </location>
    <ligand>
        <name>Cu(2+)</name>
        <dbReference type="ChEBI" id="CHEBI:29036"/>
        <label>3</label>
    </ligand>
</feature>
<feature type="binding site" evidence="2">
    <location>
        <position position="78"/>
    </location>
    <ligand>
        <name>Cu(2+)</name>
        <dbReference type="ChEBI" id="CHEBI:29036"/>
        <label>3</label>
    </ligand>
</feature>
<feature type="binding site" evidence="2">
    <location>
        <position position="79"/>
    </location>
    <ligand>
        <name>Cu(2+)</name>
        <dbReference type="ChEBI" id="CHEBI:29036"/>
        <label>3</label>
    </ligand>
</feature>
<feature type="binding site" evidence="2">
    <location>
        <position position="85"/>
    </location>
    <ligand>
        <name>Cu(2+)</name>
        <dbReference type="ChEBI" id="CHEBI:29036"/>
        <label>4</label>
    </ligand>
</feature>
<feature type="binding site" evidence="2">
    <location>
        <position position="86"/>
    </location>
    <ligand>
        <name>Cu(2+)</name>
        <dbReference type="ChEBI" id="CHEBI:29036"/>
        <label>4</label>
    </ligand>
</feature>
<feature type="binding site" evidence="2">
    <location>
        <position position="87"/>
    </location>
    <ligand>
        <name>Cu(2+)</name>
        <dbReference type="ChEBI" id="CHEBI:29036"/>
        <label>4</label>
    </ligand>
</feature>
<feature type="lipid moiety-binding region" description="GPI-anchor amidated serine" evidence="3">
    <location>
        <position position="231"/>
    </location>
</feature>
<feature type="glycosylation site" description="N-linked (GlcNAc...) asparagine" evidence="5">
    <location>
        <position position="181"/>
    </location>
</feature>
<feature type="glycosylation site" description="N-linked (GlcNAc...) asparagine" evidence="5">
    <location>
        <position position="197"/>
    </location>
</feature>
<feature type="disulfide bond" evidence="3">
    <location>
        <begin position="179"/>
        <end position="214"/>
    </location>
</feature>
<organism>
    <name type="scientific">Sigmodon hispidus</name>
    <name type="common">Hispid cotton rat</name>
    <dbReference type="NCBI Taxonomy" id="42415"/>
    <lineage>
        <taxon>Eukaryota</taxon>
        <taxon>Metazoa</taxon>
        <taxon>Chordata</taxon>
        <taxon>Craniata</taxon>
        <taxon>Vertebrata</taxon>
        <taxon>Euteleostomi</taxon>
        <taxon>Mammalia</taxon>
        <taxon>Eutheria</taxon>
        <taxon>Euarchontoglires</taxon>
        <taxon>Glires</taxon>
        <taxon>Rodentia</taxon>
        <taxon>Myomorpha</taxon>
        <taxon>Muroidea</taxon>
        <taxon>Cricetidae</taxon>
        <taxon>Sigmodontinae</taxon>
        <taxon>Sigmodon</taxon>
    </lineage>
</organism>
<proteinExistence type="inferred from homology"/>
<keyword id="KW-0034">Amyloid</keyword>
<keyword id="KW-1003">Cell membrane</keyword>
<keyword id="KW-0186">Copper</keyword>
<keyword id="KW-1015">Disulfide bond</keyword>
<keyword id="KW-0325">Glycoprotein</keyword>
<keyword id="KW-0333">Golgi apparatus</keyword>
<keyword id="KW-0336">GPI-anchor</keyword>
<keyword id="KW-0449">Lipoprotein</keyword>
<keyword id="KW-0472">Membrane</keyword>
<keyword id="KW-0479">Metal-binding</keyword>
<keyword id="KW-0640">Prion</keyword>
<keyword id="KW-0677">Repeat</keyword>
<keyword id="KW-0732">Signal</keyword>
<keyword id="KW-0862">Zinc</keyword>
<accession>Q9Z0T3</accession>
<evidence type="ECO:0000250" key="1"/>
<evidence type="ECO:0000250" key="2">
    <source>
        <dbReference type="UniProtKB" id="P04156"/>
    </source>
</evidence>
<evidence type="ECO:0000250" key="3">
    <source>
        <dbReference type="UniProtKB" id="P04273"/>
    </source>
</evidence>
<evidence type="ECO:0000250" key="4">
    <source>
        <dbReference type="UniProtKB" id="P04925"/>
    </source>
</evidence>
<evidence type="ECO:0000255" key="5"/>
<evidence type="ECO:0000256" key="6">
    <source>
        <dbReference type="SAM" id="MobiDB-lite"/>
    </source>
</evidence>
<evidence type="ECO:0000305" key="7"/>
<sequence length="254" mass="27874">MANLGYWLLALFVATWTDVGLCKKRPKPGGWNTGGSRYPGQGNPGGNRYPPQGGGTWGQPHGGGWGQPHGGGWGQPHGGGWGQPHGGGWGQGGGTHSQWNKPSKPKTNMKHVAGAAAAGAVVGGLGGYMLGSAMSRPMIHFGNDWEDRYYRENMYRYPNQVYYRPVDQYNNQNNFVHDCVNITIKQHTVTTTTKGENFTETDVKMMERVVEQMCVTQYQKESQAYYDGRRSSAVLFSSPPMILLISFLIFLIVG</sequence>